<reference key="1">
    <citation type="journal article" date="2006" name="Proc. Natl. Acad. Sci. U.S.A.">
        <title>Comparative genomics of the lactic acid bacteria.</title>
        <authorList>
            <person name="Makarova K.S."/>
            <person name="Slesarev A."/>
            <person name="Wolf Y.I."/>
            <person name="Sorokin A."/>
            <person name="Mirkin B."/>
            <person name="Koonin E.V."/>
            <person name="Pavlov A."/>
            <person name="Pavlova N."/>
            <person name="Karamychev V."/>
            <person name="Polouchine N."/>
            <person name="Shakhova V."/>
            <person name="Grigoriev I."/>
            <person name="Lou Y."/>
            <person name="Rohksar D."/>
            <person name="Lucas S."/>
            <person name="Huang K."/>
            <person name="Goodstein D.M."/>
            <person name="Hawkins T."/>
            <person name="Plengvidhya V."/>
            <person name="Welker D."/>
            <person name="Hughes J."/>
            <person name="Goh Y."/>
            <person name="Benson A."/>
            <person name="Baldwin K."/>
            <person name="Lee J.-H."/>
            <person name="Diaz-Muniz I."/>
            <person name="Dosti B."/>
            <person name="Smeianov V."/>
            <person name="Wechter W."/>
            <person name="Barabote R."/>
            <person name="Lorca G."/>
            <person name="Altermann E."/>
            <person name="Barrangou R."/>
            <person name="Ganesan B."/>
            <person name="Xie Y."/>
            <person name="Rawsthorne H."/>
            <person name="Tamir D."/>
            <person name="Parker C."/>
            <person name="Breidt F."/>
            <person name="Broadbent J.R."/>
            <person name="Hutkins R."/>
            <person name="O'Sullivan D."/>
            <person name="Steele J."/>
            <person name="Unlu G."/>
            <person name="Saier M.H. Jr."/>
            <person name="Klaenhammer T."/>
            <person name="Richardson P."/>
            <person name="Kozyavkin S."/>
            <person name="Weimer B.C."/>
            <person name="Mills D.A."/>
        </authorList>
    </citation>
    <scope>NUCLEOTIDE SEQUENCE [LARGE SCALE GENOMIC DNA]</scope>
    <source>
        <strain>ATCC 33323 / DSM 20243 / BCRC 14619 / CIP 102991 / JCM 1131 / KCTC 3163 / NCIMB 11718 / NCTC 13722 / AM63</strain>
    </source>
</reference>
<organism>
    <name type="scientific">Lactobacillus gasseri (strain ATCC 33323 / DSM 20243 / BCRC 14619 / CIP 102991 / JCM 1131 / KCTC 3163 / NCIMB 11718 / NCTC 13722 / AM63)</name>
    <dbReference type="NCBI Taxonomy" id="324831"/>
    <lineage>
        <taxon>Bacteria</taxon>
        <taxon>Bacillati</taxon>
        <taxon>Bacillota</taxon>
        <taxon>Bacilli</taxon>
        <taxon>Lactobacillales</taxon>
        <taxon>Lactobacillaceae</taxon>
        <taxon>Lactobacillus</taxon>
    </lineage>
</organism>
<accession>Q040F1</accession>
<keyword id="KW-0255">Endonuclease</keyword>
<keyword id="KW-0378">Hydrolase</keyword>
<keyword id="KW-0540">Nuclease</keyword>
<keyword id="KW-0694">RNA-binding</keyword>
<keyword id="KW-0819">tRNA processing</keyword>
<sequence length="122" mass="14395">MRKSYRVKTERDFQKVFKEGQSMANRGFVVYTLPKEKQKHFRVGISVGKKVGHTAVARNRLKRFIRATLTELKPEIRSDLDFLVIARPYARDFDMERTKKNLIHVLRLAKVLSNEETETEEK</sequence>
<name>RNPA_LACGA</name>
<comment type="function">
    <text evidence="1">RNaseP catalyzes the removal of the 5'-leader sequence from pre-tRNA to produce the mature 5'-terminus. It can also cleave other RNA substrates such as 4.5S RNA. The protein component plays an auxiliary but essential role in vivo by binding to the 5'-leader sequence and broadening the substrate specificity of the ribozyme.</text>
</comment>
<comment type="catalytic activity">
    <reaction evidence="1">
        <text>Endonucleolytic cleavage of RNA, removing 5'-extranucleotides from tRNA precursor.</text>
        <dbReference type="EC" id="3.1.26.5"/>
    </reaction>
</comment>
<comment type="subunit">
    <text evidence="1">Consists of a catalytic RNA component (M1 or rnpB) and a protein subunit.</text>
</comment>
<comment type="similarity">
    <text evidence="1">Belongs to the RnpA family.</text>
</comment>
<proteinExistence type="inferred from homology"/>
<evidence type="ECO:0000255" key="1">
    <source>
        <dbReference type="HAMAP-Rule" id="MF_00227"/>
    </source>
</evidence>
<gene>
    <name evidence="1" type="primary">rnpA</name>
    <name type="ordered locus">LGAS_1897</name>
</gene>
<dbReference type="EC" id="3.1.26.5" evidence="1"/>
<dbReference type="EMBL" id="CP000413">
    <property type="protein sequence ID" value="ABJ61171.1"/>
    <property type="molecule type" value="Genomic_DNA"/>
</dbReference>
<dbReference type="RefSeq" id="WP_003648142.1">
    <property type="nucleotide sequence ID" value="NZ_WBMG01000006.1"/>
</dbReference>
<dbReference type="SMR" id="Q040F1"/>
<dbReference type="GeneID" id="48925880"/>
<dbReference type="KEGG" id="lga:LGAS_1897"/>
<dbReference type="HOGENOM" id="CLU_117179_9_1_9"/>
<dbReference type="BioCyc" id="LGAS324831:G1G6Y-1890-MONOMER"/>
<dbReference type="Proteomes" id="UP000000664">
    <property type="component" value="Chromosome"/>
</dbReference>
<dbReference type="GO" id="GO:0030677">
    <property type="term" value="C:ribonuclease P complex"/>
    <property type="evidence" value="ECO:0007669"/>
    <property type="project" value="TreeGrafter"/>
</dbReference>
<dbReference type="GO" id="GO:0042781">
    <property type="term" value="F:3'-tRNA processing endoribonuclease activity"/>
    <property type="evidence" value="ECO:0007669"/>
    <property type="project" value="TreeGrafter"/>
</dbReference>
<dbReference type="GO" id="GO:0004526">
    <property type="term" value="F:ribonuclease P activity"/>
    <property type="evidence" value="ECO:0007669"/>
    <property type="project" value="UniProtKB-UniRule"/>
</dbReference>
<dbReference type="GO" id="GO:0000049">
    <property type="term" value="F:tRNA binding"/>
    <property type="evidence" value="ECO:0007669"/>
    <property type="project" value="UniProtKB-UniRule"/>
</dbReference>
<dbReference type="GO" id="GO:0001682">
    <property type="term" value="P:tRNA 5'-leader removal"/>
    <property type="evidence" value="ECO:0007669"/>
    <property type="project" value="UniProtKB-UniRule"/>
</dbReference>
<dbReference type="FunFam" id="3.30.230.10:FF:000021">
    <property type="entry name" value="Ribonuclease P protein component"/>
    <property type="match status" value="1"/>
</dbReference>
<dbReference type="Gene3D" id="3.30.230.10">
    <property type="match status" value="1"/>
</dbReference>
<dbReference type="HAMAP" id="MF_00227">
    <property type="entry name" value="RNase_P"/>
    <property type="match status" value="1"/>
</dbReference>
<dbReference type="InterPro" id="IPR020568">
    <property type="entry name" value="Ribosomal_Su5_D2-typ_SF"/>
</dbReference>
<dbReference type="InterPro" id="IPR014721">
    <property type="entry name" value="Ribsml_uS5_D2-typ_fold_subgr"/>
</dbReference>
<dbReference type="InterPro" id="IPR000100">
    <property type="entry name" value="RNase_P"/>
</dbReference>
<dbReference type="NCBIfam" id="TIGR00188">
    <property type="entry name" value="rnpA"/>
    <property type="match status" value="1"/>
</dbReference>
<dbReference type="PANTHER" id="PTHR33992">
    <property type="entry name" value="RIBONUCLEASE P PROTEIN COMPONENT"/>
    <property type="match status" value="1"/>
</dbReference>
<dbReference type="PANTHER" id="PTHR33992:SF1">
    <property type="entry name" value="RIBONUCLEASE P PROTEIN COMPONENT"/>
    <property type="match status" value="1"/>
</dbReference>
<dbReference type="Pfam" id="PF00825">
    <property type="entry name" value="Ribonuclease_P"/>
    <property type="match status" value="1"/>
</dbReference>
<dbReference type="SUPFAM" id="SSF54211">
    <property type="entry name" value="Ribosomal protein S5 domain 2-like"/>
    <property type="match status" value="1"/>
</dbReference>
<feature type="chain" id="PRO_1000021418" description="Ribonuclease P protein component">
    <location>
        <begin position="1"/>
        <end position="122"/>
    </location>
</feature>
<protein>
    <recommendedName>
        <fullName evidence="1">Ribonuclease P protein component</fullName>
        <shortName evidence="1">RNase P protein</shortName>
        <shortName evidence="1">RNaseP protein</shortName>
        <ecNumber evidence="1">3.1.26.5</ecNumber>
    </recommendedName>
    <alternativeName>
        <fullName evidence="1">Protein C5</fullName>
    </alternativeName>
</protein>